<sequence>MSHTIRDKQKLKARTSKIQGQVIALKKMLDEPHECAAVLQQIAAIRGAVNGLMREVIKGHLTEHIVHQSDEARREEDLDVILKVLDSYIK</sequence>
<organism>
    <name type="scientific">Salmonella typhi</name>
    <dbReference type="NCBI Taxonomy" id="90370"/>
    <lineage>
        <taxon>Bacteria</taxon>
        <taxon>Pseudomonadati</taxon>
        <taxon>Pseudomonadota</taxon>
        <taxon>Gammaproteobacteria</taxon>
        <taxon>Enterobacterales</taxon>
        <taxon>Enterobacteriaceae</taxon>
        <taxon>Salmonella</taxon>
    </lineage>
</organism>
<gene>
    <name type="primary">rcnR</name>
    <name type="ordered locus">STY3168</name>
    <name type="ordered locus">t2933</name>
</gene>
<keyword id="KW-0963">Cytoplasm</keyword>
<name>RCNR_SALTI</name>
<comment type="subcellular location">
    <subcellularLocation>
        <location evidence="1">Cytoplasm</location>
    </subcellularLocation>
</comment>
<comment type="similarity">
    <text evidence="1">Belongs to the FrmR/RcnR family.</text>
</comment>
<protein>
    <recommendedName>
        <fullName>Transcriptional repressor RcnR homolog</fullName>
    </recommendedName>
</protein>
<dbReference type="EMBL" id="AL513382">
    <property type="protein sequence ID" value="CAD02849.1"/>
    <property type="molecule type" value="Genomic_DNA"/>
</dbReference>
<dbReference type="EMBL" id="AE014613">
    <property type="protein sequence ID" value="AAO70487.1"/>
    <property type="molecule type" value="Genomic_DNA"/>
</dbReference>
<dbReference type="RefSeq" id="NP_457418.1">
    <property type="nucleotide sequence ID" value="NC_003198.1"/>
</dbReference>
<dbReference type="RefSeq" id="WP_000019953.1">
    <property type="nucleotide sequence ID" value="NZ_WSUR01000024.1"/>
</dbReference>
<dbReference type="SMR" id="Q8XFV2"/>
<dbReference type="STRING" id="220341.gene:17587049"/>
<dbReference type="KEGG" id="stt:t2933"/>
<dbReference type="KEGG" id="sty:STY3168"/>
<dbReference type="PATRIC" id="fig|220341.7.peg.3225"/>
<dbReference type="eggNOG" id="COG1937">
    <property type="taxonomic scope" value="Bacteria"/>
</dbReference>
<dbReference type="HOGENOM" id="CLU_130332_3_0_6"/>
<dbReference type="OMA" id="EHLTECI"/>
<dbReference type="Proteomes" id="UP000000541">
    <property type="component" value="Chromosome"/>
</dbReference>
<dbReference type="Proteomes" id="UP000002670">
    <property type="component" value="Chromosome"/>
</dbReference>
<dbReference type="GO" id="GO:0005737">
    <property type="term" value="C:cytoplasm"/>
    <property type="evidence" value="ECO:0007669"/>
    <property type="project" value="UniProtKB-SubCell"/>
</dbReference>
<dbReference type="GO" id="GO:0003677">
    <property type="term" value="F:DNA binding"/>
    <property type="evidence" value="ECO:0007669"/>
    <property type="project" value="InterPro"/>
</dbReference>
<dbReference type="GO" id="GO:0046872">
    <property type="term" value="F:metal ion binding"/>
    <property type="evidence" value="ECO:0007669"/>
    <property type="project" value="InterPro"/>
</dbReference>
<dbReference type="GO" id="GO:0045892">
    <property type="term" value="P:negative regulation of DNA-templated transcription"/>
    <property type="evidence" value="ECO:0007669"/>
    <property type="project" value="UniProtKB-ARBA"/>
</dbReference>
<dbReference type="CDD" id="cd10153">
    <property type="entry name" value="RcnR-FrmR-like_DUF156"/>
    <property type="match status" value="1"/>
</dbReference>
<dbReference type="FunFam" id="1.20.58.1000:FF:000001">
    <property type="entry name" value="Transcriptional repressor RcnR"/>
    <property type="match status" value="1"/>
</dbReference>
<dbReference type="Gene3D" id="1.20.58.1000">
    <property type="entry name" value="Metal-sensitive repressor, helix protomer"/>
    <property type="match status" value="1"/>
</dbReference>
<dbReference type="InterPro" id="IPR003735">
    <property type="entry name" value="Metal_Tscrpt_repr"/>
</dbReference>
<dbReference type="InterPro" id="IPR038390">
    <property type="entry name" value="Metal_Tscrpt_repr_sf"/>
</dbReference>
<dbReference type="NCBIfam" id="NF011613">
    <property type="entry name" value="PRK15039.1"/>
    <property type="match status" value="1"/>
</dbReference>
<dbReference type="PANTHER" id="PTHR33677">
    <property type="entry name" value="TRANSCRIPTIONAL REPRESSOR FRMR-RELATED"/>
    <property type="match status" value="1"/>
</dbReference>
<dbReference type="PANTHER" id="PTHR33677:SF1">
    <property type="entry name" value="TRANSCRIPTIONAL REPRESSOR RCNR"/>
    <property type="match status" value="1"/>
</dbReference>
<dbReference type="Pfam" id="PF02583">
    <property type="entry name" value="Trns_repr_metal"/>
    <property type="match status" value="1"/>
</dbReference>
<proteinExistence type="inferred from homology"/>
<evidence type="ECO:0000305" key="1"/>
<accession>Q8XFV2</accession>
<accession>Q7AMC3</accession>
<feature type="chain" id="PRO_0000332702" description="Transcriptional repressor RcnR homolog">
    <location>
        <begin position="1"/>
        <end position="90"/>
    </location>
</feature>
<reference key="1">
    <citation type="journal article" date="2001" name="Nature">
        <title>Complete genome sequence of a multiple drug resistant Salmonella enterica serovar Typhi CT18.</title>
        <authorList>
            <person name="Parkhill J."/>
            <person name="Dougan G."/>
            <person name="James K.D."/>
            <person name="Thomson N.R."/>
            <person name="Pickard D."/>
            <person name="Wain J."/>
            <person name="Churcher C.M."/>
            <person name="Mungall K.L."/>
            <person name="Bentley S.D."/>
            <person name="Holden M.T.G."/>
            <person name="Sebaihia M."/>
            <person name="Baker S."/>
            <person name="Basham D."/>
            <person name="Brooks K."/>
            <person name="Chillingworth T."/>
            <person name="Connerton P."/>
            <person name="Cronin A."/>
            <person name="Davis P."/>
            <person name="Davies R.M."/>
            <person name="Dowd L."/>
            <person name="White N."/>
            <person name="Farrar J."/>
            <person name="Feltwell T."/>
            <person name="Hamlin N."/>
            <person name="Haque A."/>
            <person name="Hien T.T."/>
            <person name="Holroyd S."/>
            <person name="Jagels K."/>
            <person name="Krogh A."/>
            <person name="Larsen T.S."/>
            <person name="Leather S."/>
            <person name="Moule S."/>
            <person name="O'Gaora P."/>
            <person name="Parry C."/>
            <person name="Quail M.A."/>
            <person name="Rutherford K.M."/>
            <person name="Simmonds M."/>
            <person name="Skelton J."/>
            <person name="Stevens K."/>
            <person name="Whitehead S."/>
            <person name="Barrell B.G."/>
        </authorList>
    </citation>
    <scope>NUCLEOTIDE SEQUENCE [LARGE SCALE GENOMIC DNA]</scope>
    <source>
        <strain>CT18</strain>
    </source>
</reference>
<reference key="2">
    <citation type="journal article" date="2003" name="J. Bacteriol.">
        <title>Comparative genomics of Salmonella enterica serovar Typhi strains Ty2 and CT18.</title>
        <authorList>
            <person name="Deng W."/>
            <person name="Liou S.-R."/>
            <person name="Plunkett G. III"/>
            <person name="Mayhew G.F."/>
            <person name="Rose D.J."/>
            <person name="Burland V."/>
            <person name="Kodoyianni V."/>
            <person name="Schwartz D.C."/>
            <person name="Blattner F.R."/>
        </authorList>
    </citation>
    <scope>NUCLEOTIDE SEQUENCE [LARGE SCALE GENOMIC DNA]</scope>
    <source>
        <strain>ATCC 700931 / Ty2</strain>
    </source>
</reference>